<gene>
    <name type="primary">TSC10</name>
    <name type="ordered locus">KLLA0F01749g</name>
</gene>
<name>KDSR_KLULA</name>
<organism>
    <name type="scientific">Kluyveromyces lactis (strain ATCC 8585 / CBS 2359 / DSM 70799 / NBRC 1267 / NRRL Y-1140 / WM37)</name>
    <name type="common">Yeast</name>
    <name type="synonym">Candida sphaerica</name>
    <dbReference type="NCBI Taxonomy" id="284590"/>
    <lineage>
        <taxon>Eukaryota</taxon>
        <taxon>Fungi</taxon>
        <taxon>Dikarya</taxon>
        <taxon>Ascomycota</taxon>
        <taxon>Saccharomycotina</taxon>
        <taxon>Saccharomycetes</taxon>
        <taxon>Saccharomycetales</taxon>
        <taxon>Saccharomycetaceae</taxon>
        <taxon>Kluyveromyces</taxon>
    </lineage>
</organism>
<comment type="function">
    <text evidence="4">Catalyzes the reduction of 3'-oxosphinganine (3-ketodihydrosphingosine/KDS) to sphinganine (dihydrosphingosine/DHS), the second step of de novo sphingolipid biosynthesis.</text>
</comment>
<comment type="catalytic activity">
    <reaction evidence="4">
        <text>sphinganine + NADP(+) = 3-oxosphinganine + NADPH + H(+)</text>
        <dbReference type="Rhea" id="RHEA:22640"/>
        <dbReference type="ChEBI" id="CHEBI:15378"/>
        <dbReference type="ChEBI" id="CHEBI:57783"/>
        <dbReference type="ChEBI" id="CHEBI:57817"/>
        <dbReference type="ChEBI" id="CHEBI:58299"/>
        <dbReference type="ChEBI" id="CHEBI:58349"/>
        <dbReference type="EC" id="1.1.1.102"/>
    </reaction>
    <physiologicalReaction direction="right-to-left" evidence="4">
        <dbReference type="Rhea" id="RHEA:22642"/>
    </physiologicalReaction>
</comment>
<comment type="pathway">
    <text>Lipid metabolism; sphingolipid metabolism.</text>
</comment>
<comment type="subcellular location">
    <subcellularLocation>
        <location evidence="4">Endoplasmic reticulum membrane</location>
        <topology evidence="7">Single-pass membrane protein</topology>
    </subcellularLocation>
</comment>
<comment type="similarity">
    <text evidence="7">Belongs to the short-chain dehydrogenases/reductases (SDR) family.</text>
</comment>
<keyword id="KW-0256">Endoplasmic reticulum</keyword>
<keyword id="KW-0443">Lipid metabolism</keyword>
<keyword id="KW-0472">Membrane</keyword>
<keyword id="KW-0521">NADP</keyword>
<keyword id="KW-0547">Nucleotide-binding</keyword>
<keyword id="KW-0560">Oxidoreductase</keyword>
<keyword id="KW-1185">Reference proteome</keyword>
<keyword id="KW-0746">Sphingolipid metabolism</keyword>
<keyword id="KW-0812">Transmembrane</keyword>
<keyword id="KW-1133">Transmembrane helix</keyword>
<dbReference type="EC" id="1.1.1.102" evidence="4"/>
<dbReference type="EMBL" id="CR382126">
    <property type="protein sequence ID" value="CAG97866.1"/>
    <property type="molecule type" value="Genomic_DNA"/>
</dbReference>
<dbReference type="RefSeq" id="XP_455159.1">
    <property type="nucleotide sequence ID" value="XM_455159.1"/>
</dbReference>
<dbReference type="SMR" id="Q6CLN0"/>
<dbReference type="FunCoup" id="Q6CLN0">
    <property type="interactions" value="131"/>
</dbReference>
<dbReference type="STRING" id="284590.Q6CLN0"/>
<dbReference type="PaxDb" id="284590-Q6CLN0"/>
<dbReference type="KEGG" id="kla:KLLA0_F01749g"/>
<dbReference type="eggNOG" id="KOG1210">
    <property type="taxonomic scope" value="Eukaryota"/>
</dbReference>
<dbReference type="HOGENOM" id="CLU_010194_3_0_1"/>
<dbReference type="InParanoid" id="Q6CLN0"/>
<dbReference type="OMA" id="PRQWGFF"/>
<dbReference type="UniPathway" id="UPA00222"/>
<dbReference type="Proteomes" id="UP000000598">
    <property type="component" value="Chromosome F"/>
</dbReference>
<dbReference type="GO" id="GO:0005789">
    <property type="term" value="C:endoplasmic reticulum membrane"/>
    <property type="evidence" value="ECO:0007669"/>
    <property type="project" value="UniProtKB-SubCell"/>
</dbReference>
<dbReference type="GO" id="GO:0047560">
    <property type="term" value="F:3-dehydrosphinganine reductase activity"/>
    <property type="evidence" value="ECO:0000250"/>
    <property type="project" value="UniProtKB"/>
</dbReference>
<dbReference type="GO" id="GO:0070402">
    <property type="term" value="F:NADPH binding"/>
    <property type="evidence" value="ECO:0000250"/>
    <property type="project" value="UniProtKB"/>
</dbReference>
<dbReference type="GO" id="GO:0006666">
    <property type="term" value="P:3-keto-sphinganine metabolic process"/>
    <property type="evidence" value="ECO:0000250"/>
    <property type="project" value="UniProtKB"/>
</dbReference>
<dbReference type="GO" id="GO:0030148">
    <property type="term" value="P:sphingolipid biosynthetic process"/>
    <property type="evidence" value="ECO:0000250"/>
    <property type="project" value="UniProtKB"/>
</dbReference>
<dbReference type="CDD" id="cd08939">
    <property type="entry name" value="KDSR-like_SDR_c"/>
    <property type="match status" value="1"/>
</dbReference>
<dbReference type="Gene3D" id="3.40.50.720">
    <property type="entry name" value="NAD(P)-binding Rossmann-like Domain"/>
    <property type="match status" value="1"/>
</dbReference>
<dbReference type="InterPro" id="IPR045022">
    <property type="entry name" value="KDSR-like"/>
</dbReference>
<dbReference type="InterPro" id="IPR036291">
    <property type="entry name" value="NAD(P)-bd_dom_sf"/>
</dbReference>
<dbReference type="InterPro" id="IPR002347">
    <property type="entry name" value="SDR_fam"/>
</dbReference>
<dbReference type="PANTHER" id="PTHR43550">
    <property type="entry name" value="3-KETODIHYDROSPHINGOSINE REDUCTASE"/>
    <property type="match status" value="1"/>
</dbReference>
<dbReference type="PANTHER" id="PTHR43550:SF3">
    <property type="entry name" value="3-KETODIHYDROSPHINGOSINE REDUCTASE"/>
    <property type="match status" value="1"/>
</dbReference>
<dbReference type="Pfam" id="PF00106">
    <property type="entry name" value="adh_short"/>
    <property type="match status" value="1"/>
</dbReference>
<dbReference type="PRINTS" id="PR00081">
    <property type="entry name" value="GDHRDH"/>
</dbReference>
<dbReference type="SUPFAM" id="SSF51735">
    <property type="entry name" value="NAD(P)-binding Rossmann-fold domains"/>
    <property type="match status" value="1"/>
</dbReference>
<proteinExistence type="inferred from homology"/>
<feature type="chain" id="PRO_0000054797" description="3-ketodihydrosphingosine reductase TSC10">
    <location>
        <begin position="1"/>
        <end position="313"/>
    </location>
</feature>
<feature type="transmembrane region" description="Helical" evidence="6">
    <location>
        <begin position="278"/>
        <end position="298"/>
    </location>
</feature>
<feature type="short sequence motif" description="GXSXG" evidence="5">
    <location>
        <begin position="15"/>
        <end position="19"/>
    </location>
</feature>
<feature type="active site" description="Proton donor" evidence="2">
    <location>
        <position position="160"/>
    </location>
</feature>
<feature type="active site" description="Proton acceptor" evidence="2">
    <location>
        <position position="174"/>
    </location>
</feature>
<feature type="active site" description="Lowers pKa of active site Tyr" evidence="2">
    <location>
        <position position="178"/>
    </location>
</feature>
<feature type="binding site" evidence="1">
    <location>
        <position position="12"/>
    </location>
    <ligand>
        <name>NADP(+)</name>
        <dbReference type="ChEBI" id="CHEBI:58349"/>
    </ligand>
</feature>
<feature type="binding site" evidence="3">
    <location>
        <position position="15"/>
    </location>
    <ligand>
        <name>NADPH</name>
        <dbReference type="ChEBI" id="CHEBI:57783"/>
    </ligand>
</feature>
<feature type="binding site" evidence="3">
    <location>
        <position position="17"/>
    </location>
    <ligand>
        <name>NADPH</name>
        <dbReference type="ChEBI" id="CHEBI:57783"/>
    </ligand>
</feature>
<feature type="binding site" evidence="3">
    <location>
        <position position="19"/>
    </location>
    <ligand>
        <name>NADPH</name>
        <dbReference type="ChEBI" id="CHEBI:57783"/>
    </ligand>
</feature>
<feature type="binding site" evidence="1">
    <location>
        <position position="20"/>
    </location>
    <ligand>
        <name>NADP(+)</name>
        <dbReference type="ChEBI" id="CHEBI:58349"/>
    </ligand>
</feature>
<feature type="binding site" evidence="3">
    <location>
        <position position="47"/>
    </location>
    <ligand>
        <name>NADPH</name>
        <dbReference type="ChEBI" id="CHEBI:57783"/>
    </ligand>
</feature>
<feature type="binding site" evidence="3">
    <location>
        <position position="51"/>
    </location>
    <ligand>
        <name>NADPH</name>
        <dbReference type="ChEBI" id="CHEBI:57783"/>
    </ligand>
</feature>
<feature type="binding site" evidence="1">
    <location>
        <position position="86"/>
    </location>
    <ligand>
        <name>NADP(+)</name>
        <dbReference type="ChEBI" id="CHEBI:58349"/>
    </ligand>
</feature>
<feature type="binding site" evidence="3">
    <location>
        <position position="86"/>
    </location>
    <ligand>
        <name>NADPH</name>
        <dbReference type="ChEBI" id="CHEBI:57783"/>
    </ligand>
</feature>
<feature type="binding site" evidence="2">
    <location>
        <position position="174"/>
    </location>
    <ligand>
        <name>NADP(+)</name>
        <dbReference type="ChEBI" id="CHEBI:58349"/>
    </ligand>
</feature>
<feature type="binding site" evidence="2">
    <location>
        <position position="178"/>
    </location>
    <ligand>
        <name>NADP(+)</name>
        <dbReference type="ChEBI" id="CHEBI:58349"/>
    </ligand>
</feature>
<feature type="binding site" evidence="1">
    <location>
        <position position="207"/>
    </location>
    <ligand>
        <name>NADP(+)</name>
        <dbReference type="ChEBI" id="CHEBI:58349"/>
    </ligand>
</feature>
<accession>Q6CLN0</accession>
<evidence type="ECO:0000250" key="1">
    <source>
        <dbReference type="UniProtKB" id="L0E2Z4"/>
    </source>
</evidence>
<evidence type="ECO:0000250" key="2">
    <source>
        <dbReference type="UniProtKB" id="O93868"/>
    </source>
</evidence>
<evidence type="ECO:0000250" key="3">
    <source>
        <dbReference type="UniProtKB" id="P0CR36"/>
    </source>
</evidence>
<evidence type="ECO:0000250" key="4">
    <source>
        <dbReference type="UniProtKB" id="P38342"/>
    </source>
</evidence>
<evidence type="ECO:0000250" key="5">
    <source>
        <dbReference type="UniProtKB" id="P40471"/>
    </source>
</evidence>
<evidence type="ECO:0000255" key="6"/>
<evidence type="ECO:0000305" key="7"/>
<protein>
    <recommendedName>
        <fullName>3-ketodihydrosphingosine reductase TSC10</fullName>
        <ecNumber evidence="4">1.1.1.102</ecNumber>
    </recommendedName>
    <alternativeName>
        <fullName>3-dehydrosphinganine reductase</fullName>
    </alternativeName>
    <alternativeName>
        <fullName>KDS reductase</fullName>
    </alternativeName>
</protein>
<sequence length="313" mass="34859">MKGFNCNGQVILISGGSQGLGESFAKRFVQDDDGPGSNTNKVIIVSRSQSKLVKACERIGVDGVSLDRYVNDTNRNETKLIYHSCDTSSYDKVALMFKLLVKSELVPSQVYMCAGGSIPKLFLDLTPEELQNGITTNYSTAVNLAHVSLKHDVPHLLFFSSEVAFFPFIGYAQYAPLKQSIRSLVAILRQEHSSTRITCVYPGNFQSEGFDLENITKPAITKEIEGPSNPVTAAQCRDKIISSLKWGLDDITTDSIGWLLMACDQGLNKHSTSQFMFVFSWILGALLNITIVPIYMLICKFQIYQWKRNKDTK</sequence>
<reference key="1">
    <citation type="journal article" date="2004" name="Nature">
        <title>Genome evolution in yeasts.</title>
        <authorList>
            <person name="Dujon B."/>
            <person name="Sherman D."/>
            <person name="Fischer G."/>
            <person name="Durrens P."/>
            <person name="Casaregola S."/>
            <person name="Lafontaine I."/>
            <person name="de Montigny J."/>
            <person name="Marck C."/>
            <person name="Neuveglise C."/>
            <person name="Talla E."/>
            <person name="Goffard N."/>
            <person name="Frangeul L."/>
            <person name="Aigle M."/>
            <person name="Anthouard V."/>
            <person name="Babour A."/>
            <person name="Barbe V."/>
            <person name="Barnay S."/>
            <person name="Blanchin S."/>
            <person name="Beckerich J.-M."/>
            <person name="Beyne E."/>
            <person name="Bleykasten C."/>
            <person name="Boisrame A."/>
            <person name="Boyer J."/>
            <person name="Cattolico L."/>
            <person name="Confanioleri F."/>
            <person name="de Daruvar A."/>
            <person name="Despons L."/>
            <person name="Fabre E."/>
            <person name="Fairhead C."/>
            <person name="Ferry-Dumazet H."/>
            <person name="Groppi A."/>
            <person name="Hantraye F."/>
            <person name="Hennequin C."/>
            <person name="Jauniaux N."/>
            <person name="Joyet P."/>
            <person name="Kachouri R."/>
            <person name="Kerrest A."/>
            <person name="Koszul R."/>
            <person name="Lemaire M."/>
            <person name="Lesur I."/>
            <person name="Ma L."/>
            <person name="Muller H."/>
            <person name="Nicaud J.-M."/>
            <person name="Nikolski M."/>
            <person name="Oztas S."/>
            <person name="Ozier-Kalogeropoulos O."/>
            <person name="Pellenz S."/>
            <person name="Potier S."/>
            <person name="Richard G.-F."/>
            <person name="Straub M.-L."/>
            <person name="Suleau A."/>
            <person name="Swennen D."/>
            <person name="Tekaia F."/>
            <person name="Wesolowski-Louvel M."/>
            <person name="Westhof E."/>
            <person name="Wirth B."/>
            <person name="Zeniou-Meyer M."/>
            <person name="Zivanovic Y."/>
            <person name="Bolotin-Fukuhara M."/>
            <person name="Thierry A."/>
            <person name="Bouchier C."/>
            <person name="Caudron B."/>
            <person name="Scarpelli C."/>
            <person name="Gaillardin C."/>
            <person name="Weissenbach J."/>
            <person name="Wincker P."/>
            <person name="Souciet J.-L."/>
        </authorList>
    </citation>
    <scope>NUCLEOTIDE SEQUENCE [LARGE SCALE GENOMIC DNA]</scope>
    <source>
        <strain>ATCC 8585 / CBS 2359 / DSM 70799 / NBRC 1267 / NRRL Y-1140 / WM37</strain>
    </source>
</reference>